<keyword id="KW-0175">Coiled coil</keyword>
<keyword id="KW-0963">Cytoplasm</keyword>
<keyword id="KW-0866">Nonsense-mediated mRNA decay</keyword>
<keyword id="KW-0539">Nucleus</keyword>
<keyword id="KW-0611">Plant defense</keyword>
<keyword id="KW-1185">Reference proteome</keyword>
<keyword id="KW-0677">Repeat</keyword>
<keyword id="KW-0694">RNA-binding</keyword>
<accession>F4IUX6</accession>
<accession>O80955</accession>
<evidence type="ECO:0000250" key="1"/>
<evidence type="ECO:0000255" key="2"/>
<evidence type="ECO:0000256" key="3">
    <source>
        <dbReference type="SAM" id="MobiDB-lite"/>
    </source>
</evidence>
<evidence type="ECO:0000269" key="4">
    <source>
    </source>
</evidence>
<evidence type="ECO:0000269" key="5">
    <source>
    </source>
</evidence>
<evidence type="ECO:0000305" key="6"/>
<dbReference type="EMBL" id="AC004697">
    <property type="protein sequence ID" value="AAC28982.1"/>
    <property type="status" value="ALT_SEQ"/>
    <property type="molecule type" value="Genomic_DNA"/>
</dbReference>
<dbReference type="EMBL" id="CP002685">
    <property type="protein sequence ID" value="AEC09651.1"/>
    <property type="molecule type" value="Genomic_DNA"/>
</dbReference>
<dbReference type="EMBL" id="AK227294">
    <property type="status" value="NOT_ANNOTATED_CDS"/>
    <property type="molecule type" value="mRNA"/>
</dbReference>
<dbReference type="PIR" id="T02576">
    <property type="entry name" value="T02576"/>
</dbReference>
<dbReference type="RefSeq" id="NP_181459.4">
    <property type="nucleotide sequence ID" value="NM_129484.5"/>
</dbReference>
<dbReference type="SMR" id="F4IUX6"/>
<dbReference type="FunCoup" id="F4IUX6">
    <property type="interactions" value="4846"/>
</dbReference>
<dbReference type="STRING" id="3702.F4IUX6"/>
<dbReference type="iPTMnet" id="F4IUX6"/>
<dbReference type="PaxDb" id="3702-AT2G39260.1"/>
<dbReference type="ProteomicsDB" id="236871"/>
<dbReference type="EnsemblPlants" id="AT2G39260.1">
    <property type="protein sequence ID" value="AT2G39260.1"/>
    <property type="gene ID" value="AT2G39260"/>
</dbReference>
<dbReference type="GeneID" id="818511"/>
<dbReference type="Gramene" id="AT2G39260.1">
    <property type="protein sequence ID" value="AT2G39260.1"/>
    <property type="gene ID" value="AT2G39260"/>
</dbReference>
<dbReference type="KEGG" id="ath:AT2G39260"/>
<dbReference type="Araport" id="AT2G39260"/>
<dbReference type="TAIR" id="AT2G39260">
    <property type="gene designation" value="UPF2"/>
</dbReference>
<dbReference type="eggNOG" id="KOG2051">
    <property type="taxonomic scope" value="Eukaryota"/>
</dbReference>
<dbReference type="HOGENOM" id="CLU_002633_2_0_1"/>
<dbReference type="InParanoid" id="F4IUX6"/>
<dbReference type="OMA" id="DFQHHQI"/>
<dbReference type="OrthoDB" id="27832at2759"/>
<dbReference type="PRO" id="PR:F4IUX6"/>
<dbReference type="Proteomes" id="UP000006548">
    <property type="component" value="Chromosome 2"/>
</dbReference>
<dbReference type="ExpressionAtlas" id="F4IUX6">
    <property type="expression patterns" value="baseline and differential"/>
</dbReference>
<dbReference type="GO" id="GO:0005737">
    <property type="term" value="C:cytoplasm"/>
    <property type="evidence" value="ECO:0000314"/>
    <property type="project" value="UniProtKB"/>
</dbReference>
<dbReference type="GO" id="GO:0005730">
    <property type="term" value="C:nucleolus"/>
    <property type="evidence" value="ECO:0000314"/>
    <property type="project" value="UniProtKB"/>
</dbReference>
<dbReference type="GO" id="GO:0048471">
    <property type="term" value="C:perinuclear region of cytoplasm"/>
    <property type="evidence" value="ECO:0007669"/>
    <property type="project" value="UniProtKB-SubCell"/>
</dbReference>
<dbReference type="GO" id="GO:0003729">
    <property type="term" value="F:mRNA binding"/>
    <property type="evidence" value="ECO:0007005"/>
    <property type="project" value="TAIR"/>
</dbReference>
<dbReference type="GO" id="GO:0042742">
    <property type="term" value="P:defense response to bacterium"/>
    <property type="evidence" value="ECO:0000315"/>
    <property type="project" value="UniProtKB"/>
</dbReference>
<dbReference type="GO" id="GO:0009867">
    <property type="term" value="P:jasmonic acid mediated signaling pathway"/>
    <property type="evidence" value="ECO:0000315"/>
    <property type="project" value="UniProtKB"/>
</dbReference>
<dbReference type="GO" id="GO:0048571">
    <property type="term" value="P:long-day photoperiodism"/>
    <property type="evidence" value="ECO:0000315"/>
    <property type="project" value="UniProtKB"/>
</dbReference>
<dbReference type="GO" id="GO:0000184">
    <property type="term" value="P:nuclear-transcribed mRNA catabolic process, nonsense-mediated decay"/>
    <property type="evidence" value="ECO:0000315"/>
    <property type="project" value="UniProtKB"/>
</dbReference>
<dbReference type="GO" id="GO:0009611">
    <property type="term" value="P:response to wounding"/>
    <property type="evidence" value="ECO:0000315"/>
    <property type="project" value="UniProtKB"/>
</dbReference>
<dbReference type="GO" id="GO:0009863">
    <property type="term" value="P:salicylic acid mediated signaling pathway"/>
    <property type="evidence" value="ECO:0000315"/>
    <property type="project" value="UniProtKB"/>
</dbReference>
<dbReference type="FunFam" id="1.25.40.180:FF:000026">
    <property type="entry name" value="Regulator of nonsense transcripts UPF2"/>
    <property type="match status" value="1"/>
</dbReference>
<dbReference type="FunFam" id="1.25.40.180:FF:000030">
    <property type="entry name" value="Regulator of nonsense transcripts UPF2"/>
    <property type="match status" value="1"/>
</dbReference>
<dbReference type="FunFam" id="1.25.40.180:FF:000033">
    <property type="entry name" value="Regulator of nonsense transcripts UPF2"/>
    <property type="match status" value="1"/>
</dbReference>
<dbReference type="Gene3D" id="1.25.40.180">
    <property type="match status" value="3"/>
</dbReference>
<dbReference type="InterPro" id="IPR016024">
    <property type="entry name" value="ARM-type_fold"/>
</dbReference>
<dbReference type="InterPro" id="IPR003890">
    <property type="entry name" value="MIF4G-like_typ-3"/>
</dbReference>
<dbReference type="InterPro" id="IPR039762">
    <property type="entry name" value="Nmd2/UPF2"/>
</dbReference>
<dbReference type="InterPro" id="IPR007193">
    <property type="entry name" value="Upf2/Nmd2_C"/>
</dbReference>
<dbReference type="PANTHER" id="PTHR12839">
    <property type="entry name" value="NONSENSE-MEDIATED MRNA DECAY PROTEIN 2 UP-FRAMESHIFT SUPPRESSOR 2"/>
    <property type="match status" value="1"/>
</dbReference>
<dbReference type="PANTHER" id="PTHR12839:SF7">
    <property type="entry name" value="REGULATOR OF NONSENSE TRANSCRIPTS 2"/>
    <property type="match status" value="1"/>
</dbReference>
<dbReference type="Pfam" id="PF02854">
    <property type="entry name" value="MIF4G"/>
    <property type="match status" value="3"/>
</dbReference>
<dbReference type="Pfam" id="PF04050">
    <property type="entry name" value="Upf2"/>
    <property type="match status" value="1"/>
</dbReference>
<dbReference type="SMART" id="SM00543">
    <property type="entry name" value="MIF4G"/>
    <property type="match status" value="3"/>
</dbReference>
<dbReference type="SUPFAM" id="SSF48371">
    <property type="entry name" value="ARM repeat"/>
    <property type="match status" value="3"/>
</dbReference>
<name>RENT2_ARATH</name>
<feature type="chain" id="PRO_0000421874" description="Regulator of nonsense transcripts UPF2">
    <location>
        <begin position="1"/>
        <end position="1181"/>
    </location>
</feature>
<feature type="domain" description="MIF4G 1">
    <location>
        <begin position="61"/>
        <end position="264"/>
    </location>
</feature>
<feature type="domain" description="MIF4G 2">
    <location>
        <begin position="469"/>
        <end position="655"/>
    </location>
</feature>
<feature type="domain" description="MIF4G 3">
    <location>
        <begin position="672"/>
        <end position="871"/>
    </location>
</feature>
<feature type="region of interest" description="Disordered" evidence="3">
    <location>
        <begin position="309"/>
        <end position="348"/>
    </location>
</feature>
<feature type="region of interest" description="Disordered" evidence="3">
    <location>
        <begin position="375"/>
        <end position="459"/>
    </location>
</feature>
<feature type="region of interest" description="Binds to UPF3" evidence="1">
    <location>
        <begin position="735"/>
        <end position="755"/>
    </location>
</feature>
<feature type="region of interest" description="Disordered" evidence="3">
    <location>
        <begin position="893"/>
        <end position="991"/>
    </location>
</feature>
<feature type="region of interest" description="Sufficient for interaction with UPF1 C-terminus" evidence="1">
    <location>
        <begin position="981"/>
        <end position="1181"/>
    </location>
</feature>
<feature type="region of interest" description="Necessary for interaction with UPF1" evidence="1">
    <location>
        <begin position="999"/>
        <end position="1102"/>
    </location>
</feature>
<feature type="region of interest" description="Interaction with UPF1" evidence="1">
    <location>
        <begin position="999"/>
        <end position="1023"/>
    </location>
</feature>
<feature type="region of interest" description="Interaction with UPF1" evidence="1">
    <location>
        <begin position="1066"/>
        <end position="1111"/>
    </location>
</feature>
<feature type="region of interest" description="Disordered" evidence="3">
    <location>
        <begin position="1129"/>
        <end position="1181"/>
    </location>
</feature>
<feature type="coiled-coil region" evidence="2">
    <location>
        <begin position="6"/>
        <end position="41"/>
    </location>
</feature>
<feature type="coiled-coil region" evidence="2">
    <location>
        <begin position="260"/>
        <end position="309"/>
    </location>
</feature>
<feature type="coiled-coil region" evidence="2">
    <location>
        <begin position="425"/>
        <end position="451"/>
    </location>
</feature>
<feature type="coiled-coil region" evidence="2">
    <location>
        <begin position="539"/>
        <end position="559"/>
    </location>
</feature>
<feature type="coiled-coil region" evidence="2">
    <location>
        <begin position="1000"/>
        <end position="1021"/>
    </location>
</feature>
<feature type="compositionally biased region" description="Basic and acidic residues" evidence="3">
    <location>
        <begin position="375"/>
        <end position="389"/>
    </location>
</feature>
<feature type="compositionally biased region" description="Polar residues" evidence="3">
    <location>
        <begin position="398"/>
        <end position="412"/>
    </location>
</feature>
<feature type="compositionally biased region" description="Basic and acidic residues" evidence="3">
    <location>
        <begin position="415"/>
        <end position="459"/>
    </location>
</feature>
<feature type="compositionally biased region" description="Basic and acidic residues" evidence="3">
    <location>
        <begin position="893"/>
        <end position="911"/>
    </location>
</feature>
<feature type="compositionally biased region" description="Low complexity" evidence="3">
    <location>
        <begin position="912"/>
        <end position="926"/>
    </location>
</feature>
<feature type="compositionally biased region" description="Basic and acidic residues" evidence="3">
    <location>
        <begin position="927"/>
        <end position="941"/>
    </location>
</feature>
<feature type="compositionally biased region" description="Acidic residues" evidence="3">
    <location>
        <begin position="972"/>
        <end position="985"/>
    </location>
</feature>
<feature type="compositionally biased region" description="Low complexity" evidence="3">
    <location>
        <begin position="1142"/>
        <end position="1153"/>
    </location>
</feature>
<comment type="function">
    <text evidence="1 5">Recruited by UPF3 associated with the EJC core at the cytoplasmic side of the nuclear envelope and the subsequent formation of an UPF1-UPF2-UPF3 surveillance complex (including UPF1 bound to release factors at the stalled ribosome) is believed to activate NMD. In cooperation with UPF3 stimulates both ATPase and RNA helicase activities of UPF1. Binds spliced mRNA (By similarity). Involved in nonsense-mediated decay (NMD) of mRNAs containing premature stop codons by associating with the nuclear exon junction complex (EJC). Required for plant development and adaptation to environmental stresses, including plant defense and response to wounding.</text>
</comment>
<comment type="subunit">
    <text evidence="1">Found in a post-splicing messenger ribonucleoprotein (mRNP) complex. Associates with the exon junction complex (EJC). Interacts with UPF1 and UPF3 (By similarity).</text>
</comment>
<comment type="subcellular location">
    <subcellularLocation>
        <location evidence="4">Nucleus</location>
        <location evidence="4">Nucleolus</location>
    </subcellularLocation>
    <subcellularLocation>
        <location evidence="4">Cytoplasm</location>
    </subcellularLocation>
    <subcellularLocation>
        <location evidence="1">Cytoplasm</location>
        <location evidence="1">Perinuclear region</location>
    </subcellularLocation>
</comment>
<comment type="disruption phenotype">
    <text evidence="5">Seedling lethal. Accumulation of mRNAs with premature termination codons (PTC). Photoperiod-dependent altered development and stress responses; in long days (16 hours light), altered organ morphologies (e.g. epinastic leaves, small rosette size, long seeds, some abnormal flowers and stunted stem growth), disturbed homeostasis of wounding-induced jasmonic acid and pathogen-elicited salicylic acid. Increased resistance to Pseudomonas syringae pv. tomato strain DC3000.</text>
</comment>
<comment type="similarity">
    <text evidence="6">Belongs to the RENT2 family.</text>
</comment>
<comment type="sequence caution" evidence="6">
    <conflict type="erroneous gene model prediction">
        <sequence resource="EMBL-CDS" id="AAC28982"/>
    </conflict>
</comment>
<comment type="sequence caution" evidence="6">
    <conflict type="frameshift">
        <sequence resource="EMBL" id="AK227294"/>
    </conflict>
</comment>
<sequence length="1181" mass="133962">MDHPEDESHSEKQDDEEALARLEEIKKSIEAKLTLRQNNLNPERPDSAYLRTLDSSIKRNTAVIKKLKQINEEQREGLMDDLRGVNLSKFVSEAVTAICEAKLKSSDIQAAVQICSLLHQRYKEFSASLTQGLLKVFFPGKSAEDLEADKNSKAMKKRSTLKLLLELYYVGVIEDSNIFINIIKDLTSVEQLKDRDTTQTNLTLLTSFARQGRIFLGLPISGQDEDFFKGLDVTADQKKSFKKAFNTYYDALADLLQSEHKLLLQMEKENAKLVNAKGELSEDSASSYEKLRKSYDHLYRNISSLAEALDMQPPVMPEDGTTRLTAGDEASPSGTVKDTSVPEPIWDDEDTKTFYECLPDLRAFVPAVLLGEAEPKSNEQSAKAKEKLSESSSEVVENQQTTEDTTEVSADSASMDDRSNAEQPKEKEEVEKEKAKDTKKEKGKEKDSEKKMEHEKEKGKSLDVANFERLLQRLPGCVSRDLIDQLTVEYCYLNSKTNRKKLVKALFNVPRTSLELLAYYSRMVATLASCMKDIPSMLVQMLEDEFNSLVHKKDQMNIETKIRNIRFIGELCKFKIVPAGLVFSCLKACLDEFTHHNIDVACNLLETCGRFLYRSPETTLRMTNMLDILMRLKNVKNLDPRQSTLVENAYYLCKPPERSARISKVRPPLHQYVRKLLFSDLDKDSIANVLKQLRKLPWSECEQYILKCFMKVHKGKYGQIHLIASLTSGLSRHHDEFVVAVVDEVLEEIRVGLELNEYGAQQKRLAHMRFLGELYNYEHVDSSVIFETLYLTLLYGHDTSEQEVLDPPEDFFRVRMVIILLETCGHYFDRGSSKKRLDQFLIHFQRYILSKGHLPLDIEFDLQDLFANLRPNMTRYSTIDEVNAAILQLEEREHASSGDKVSIERHSDTKPSNKSSSDVISSNGKSTAKDIRENGEAHGEESDSDSGSGSVVRDGQNEELDDGNHERGSESGDGDDYDDGDGPGSDDDKFRVRQKVVTVDLEEQADFDQELKALLQESMEQRKLELRGRPALNMTIPMSVFEGSGKDHHHFGRVVGENGEEVLDEENGEQREVQVKVLVKRGNKQQTRQMLIPSDCALVQSTKQKEAAELEEKQDIKRLVLEYNERDEEEANGLGTQILNWTSGGSRGSTRTGEGSGKSGGSRHRFYYHQGGGGSYHARRK</sequence>
<gene>
    <name type="primary">UPF2</name>
    <name type="ordered locus">At2g39260</name>
    <name type="ORF">T16B24.10</name>
</gene>
<reference key="1">
    <citation type="journal article" date="1999" name="Nature">
        <title>Sequence and analysis of chromosome 2 of the plant Arabidopsis thaliana.</title>
        <authorList>
            <person name="Lin X."/>
            <person name="Kaul S."/>
            <person name="Rounsley S.D."/>
            <person name="Shea T.P."/>
            <person name="Benito M.-I."/>
            <person name="Town C.D."/>
            <person name="Fujii C.Y."/>
            <person name="Mason T.M."/>
            <person name="Bowman C.L."/>
            <person name="Barnstead M.E."/>
            <person name="Feldblyum T.V."/>
            <person name="Buell C.R."/>
            <person name="Ketchum K.A."/>
            <person name="Lee J.J."/>
            <person name="Ronning C.M."/>
            <person name="Koo H.L."/>
            <person name="Moffat K.S."/>
            <person name="Cronin L.A."/>
            <person name="Shen M."/>
            <person name="Pai G."/>
            <person name="Van Aken S."/>
            <person name="Umayam L."/>
            <person name="Tallon L.J."/>
            <person name="Gill J.E."/>
            <person name="Adams M.D."/>
            <person name="Carrera A.J."/>
            <person name="Creasy T.H."/>
            <person name="Goodman H.M."/>
            <person name="Somerville C.R."/>
            <person name="Copenhaver G.P."/>
            <person name="Preuss D."/>
            <person name="Nierman W.C."/>
            <person name="White O."/>
            <person name="Eisen J.A."/>
            <person name="Salzberg S.L."/>
            <person name="Fraser C.M."/>
            <person name="Venter J.C."/>
        </authorList>
    </citation>
    <scope>NUCLEOTIDE SEQUENCE [LARGE SCALE GENOMIC DNA]</scope>
    <source>
        <strain>cv. Columbia</strain>
    </source>
</reference>
<reference key="2">
    <citation type="journal article" date="2017" name="Plant J.">
        <title>Araport11: a complete reannotation of the Arabidopsis thaliana reference genome.</title>
        <authorList>
            <person name="Cheng C.Y."/>
            <person name="Krishnakumar V."/>
            <person name="Chan A.P."/>
            <person name="Thibaud-Nissen F."/>
            <person name="Schobel S."/>
            <person name="Town C.D."/>
        </authorList>
    </citation>
    <scope>GENOME REANNOTATION</scope>
    <source>
        <strain>cv. Columbia</strain>
    </source>
</reference>
<reference key="3">
    <citation type="submission" date="2006-07" db="EMBL/GenBank/DDBJ databases">
        <title>Large-scale analysis of RIKEN Arabidopsis full-length (RAFL) cDNAs.</title>
        <authorList>
            <person name="Totoki Y."/>
            <person name="Seki M."/>
            <person name="Ishida J."/>
            <person name="Nakajima M."/>
            <person name="Enju A."/>
            <person name="Kamiya A."/>
            <person name="Narusaka M."/>
            <person name="Shin-i T."/>
            <person name="Nakagawa M."/>
            <person name="Sakamoto N."/>
            <person name="Oishi K."/>
            <person name="Kohara Y."/>
            <person name="Kobayashi M."/>
            <person name="Toyoda A."/>
            <person name="Sakaki Y."/>
            <person name="Sakurai T."/>
            <person name="Iida K."/>
            <person name="Akiyama K."/>
            <person name="Satou M."/>
            <person name="Toyoda T."/>
            <person name="Konagaya A."/>
            <person name="Carninci P."/>
            <person name="Kawai J."/>
            <person name="Hayashizaki Y."/>
            <person name="Shinozaki K."/>
        </authorList>
    </citation>
    <scope>NUCLEOTIDE SEQUENCE [LARGE SCALE MRNA]</scope>
    <source>
        <strain>cv. Columbia</strain>
    </source>
</reference>
<reference key="4">
    <citation type="journal article" date="2009" name="Plant Cell">
        <title>Aberrant mRNA transcripts and the nonsense-mediated decay proteins UPF2 and UPF3 are enriched in the Arabidopsis nucleolus.</title>
        <authorList>
            <person name="Kim S.H."/>
            <person name="Koroleva O.A."/>
            <person name="Lewandowska D."/>
            <person name="Pendle A.F."/>
            <person name="Clark G.P."/>
            <person name="Simpson C.G."/>
            <person name="Shaw P.J."/>
            <person name="Brown J.W.S."/>
        </authorList>
    </citation>
    <scope>SUBCELLULAR LOCATION</scope>
</reference>
<reference key="5">
    <citation type="journal article" date="2012" name="J. Integr. Plant Biol.">
        <title>Arabidopsis plants having defects in nonsense-mediated mRNA decay factors UPF1, UPF2, and UPF3 show photoperiod-dependent phenotypes in development and stress responses.</title>
        <authorList>
            <person name="Shi C."/>
            <person name="Baldwin I.T."/>
            <person name="Wu J."/>
        </authorList>
    </citation>
    <scope>FUNCTION</scope>
    <scope>DISRUPTION PHENOTYPE</scope>
    <source>
        <strain>cv. Columbia</strain>
    </source>
</reference>
<organism>
    <name type="scientific">Arabidopsis thaliana</name>
    <name type="common">Mouse-ear cress</name>
    <dbReference type="NCBI Taxonomy" id="3702"/>
    <lineage>
        <taxon>Eukaryota</taxon>
        <taxon>Viridiplantae</taxon>
        <taxon>Streptophyta</taxon>
        <taxon>Embryophyta</taxon>
        <taxon>Tracheophyta</taxon>
        <taxon>Spermatophyta</taxon>
        <taxon>Magnoliopsida</taxon>
        <taxon>eudicotyledons</taxon>
        <taxon>Gunneridae</taxon>
        <taxon>Pentapetalae</taxon>
        <taxon>rosids</taxon>
        <taxon>malvids</taxon>
        <taxon>Brassicales</taxon>
        <taxon>Brassicaceae</taxon>
        <taxon>Camelineae</taxon>
        <taxon>Arabidopsis</taxon>
    </lineage>
</organism>
<protein>
    <recommendedName>
        <fullName>Regulator of nonsense transcripts UPF2</fullName>
    </recommendedName>
    <alternativeName>
        <fullName>Nonsense mRNA reducing factor UPF2</fullName>
    </alternativeName>
    <alternativeName>
        <fullName>Up-frameshift suppressor 2 homolog</fullName>
        <shortName>AtUpf2</shortName>
    </alternativeName>
</protein>
<proteinExistence type="evidence at transcript level"/>